<accession>Q5UYI1</accession>
<protein>
    <recommendedName>
        <fullName evidence="1">DNA mismatch repair protein MutS 2</fullName>
    </recommendedName>
</protein>
<keyword id="KW-0067">ATP-binding</keyword>
<keyword id="KW-0227">DNA damage</keyword>
<keyword id="KW-0234">DNA repair</keyword>
<keyword id="KW-0238">DNA-binding</keyword>
<keyword id="KW-0547">Nucleotide-binding</keyword>
<keyword id="KW-1185">Reference proteome</keyword>
<evidence type="ECO:0000255" key="1">
    <source>
        <dbReference type="HAMAP-Rule" id="MF_00096"/>
    </source>
</evidence>
<evidence type="ECO:0000256" key="2">
    <source>
        <dbReference type="SAM" id="MobiDB-lite"/>
    </source>
</evidence>
<evidence type="ECO:0000305" key="3"/>
<sequence length="947" mass="102194">MDAALGPPEQMAELEEDLTPMMAQYYELCRQYDDALVLFQVGDFYEAFCAAAKRVARLCEITLTQREDSTGEYPMAGIPIDNAESYVETLLDAGYRVAIADQVEDPDEVSGVVERAVTRIVTPGTLTESELLGGADNNYVAALTAGERYGLALLDISTGDCYATSVGSESAVADELSRFGPAEAIVGPDVDVDRDAVFGPACLVTRYDADAFAQDRAEDRVGQYFGPPERLLAGGAEIRACGGLLAYAEYTRGSSGAVGPDGEPVDPDVDPAGTLDYLNHLTRYDPREYMLLDAVAVESLELFKRRSVRGHENRTLVDTVDETACALGRRKLTDWLRRPLLDADRIEARHGAVAELQRDPATREELSALLAEVYDLERLISRVSRGRANARDLRSLAATLSVVPDIRDHLADADARLLADLHATLDPLAETREEIEAAIRPDPPQQVTEGGVIREGYDEELDRLRSTEQSGKEWIDELEASERERTGIDSLKVGHTSVHGYYIEVTNANLDAVPEDYQRRQTLKNSERYYTPALKEREDEILRAESAADDLEYDLFCAVRDEVADEAERVQALADRLARLDVLVSFAEVAAQYDYCRPTVGSDGIDVTAGRHPVVERTEDAFIPNDTHLGSGPVPASRDGSDDGVTADDIQPFLAVVTGPNMSGKSTYMRQVALICLLAQSGSFVPAKAADLPILDRVFTRVGASDDIAGGRSTFMIEMTELATILDAATENSLVLLDEVGRGTSTADGLAIARAVTEYLHDEVGAYTLFATHHHDLTAVAAALSGATNRHFETSREDGDVRFDHELAPGPAAASYGVEVASMAGVPDSVVERSRDLLADAETADTGVEATRETEVASEPRPGTRADSETDSTATETTGPTENGAASAPAGEATSDDHAQEVFQTNGAAAEDELPESVAQQLASLDVATMTPIEAMNALADLQDRIE</sequence>
<gene>
    <name evidence="1" type="primary">mutS2</name>
    <name type="ordered locus">rrnAC2937</name>
</gene>
<feature type="chain" id="PRO_0000224423" description="DNA mismatch repair protein MutS 2">
    <location>
        <begin position="1"/>
        <end position="947"/>
    </location>
</feature>
<feature type="region of interest" description="Disordered" evidence="2">
    <location>
        <begin position="623"/>
        <end position="643"/>
    </location>
</feature>
<feature type="region of interest" description="Disordered" evidence="2">
    <location>
        <begin position="841"/>
        <end position="916"/>
    </location>
</feature>
<feature type="binding site" evidence="1">
    <location>
        <begin position="659"/>
        <end position="666"/>
    </location>
    <ligand>
        <name>ATP</name>
        <dbReference type="ChEBI" id="CHEBI:30616"/>
    </ligand>
</feature>
<proteinExistence type="inferred from homology"/>
<name>MUTS2_HALMA</name>
<organism>
    <name type="scientific">Haloarcula marismortui (strain ATCC 43049 / DSM 3752 / JCM 8966 / VKM B-1809)</name>
    <name type="common">Halobacterium marismortui</name>
    <dbReference type="NCBI Taxonomy" id="272569"/>
    <lineage>
        <taxon>Archaea</taxon>
        <taxon>Methanobacteriati</taxon>
        <taxon>Methanobacteriota</taxon>
        <taxon>Stenosarchaea group</taxon>
        <taxon>Halobacteria</taxon>
        <taxon>Halobacteriales</taxon>
        <taxon>Haloarculaceae</taxon>
        <taxon>Haloarcula</taxon>
    </lineage>
</organism>
<dbReference type="EMBL" id="AY596297">
    <property type="protein sequence ID" value="AAV47672.1"/>
    <property type="status" value="ALT_INIT"/>
    <property type="molecule type" value="Genomic_DNA"/>
</dbReference>
<dbReference type="RefSeq" id="WP_049939073.1">
    <property type="nucleotide sequence ID" value="NC_006396.1"/>
</dbReference>
<dbReference type="SMR" id="Q5UYI1"/>
<dbReference type="STRING" id="272569.rrnAC2937"/>
<dbReference type="PaxDb" id="272569-rrnAC2937"/>
<dbReference type="EnsemblBacteria" id="AAV47672">
    <property type="protein sequence ID" value="AAV47672"/>
    <property type="gene ID" value="rrnAC2937"/>
</dbReference>
<dbReference type="GeneID" id="40153767"/>
<dbReference type="KEGG" id="hma:rrnAC2937"/>
<dbReference type="PATRIC" id="fig|272569.17.peg.3496"/>
<dbReference type="eggNOG" id="arCOG02897">
    <property type="taxonomic scope" value="Archaea"/>
</dbReference>
<dbReference type="HOGENOM" id="CLU_002472_10_0_2"/>
<dbReference type="Proteomes" id="UP000001169">
    <property type="component" value="Chromosome I"/>
</dbReference>
<dbReference type="GO" id="GO:0005524">
    <property type="term" value="F:ATP binding"/>
    <property type="evidence" value="ECO:0007669"/>
    <property type="project" value="UniProtKB-UniRule"/>
</dbReference>
<dbReference type="GO" id="GO:0140664">
    <property type="term" value="F:ATP-dependent DNA damage sensor activity"/>
    <property type="evidence" value="ECO:0007669"/>
    <property type="project" value="InterPro"/>
</dbReference>
<dbReference type="GO" id="GO:0003684">
    <property type="term" value="F:damaged DNA binding"/>
    <property type="evidence" value="ECO:0007669"/>
    <property type="project" value="UniProtKB-UniRule"/>
</dbReference>
<dbReference type="GO" id="GO:0030983">
    <property type="term" value="F:mismatched DNA binding"/>
    <property type="evidence" value="ECO:0007669"/>
    <property type="project" value="InterPro"/>
</dbReference>
<dbReference type="GO" id="GO:0006298">
    <property type="term" value="P:mismatch repair"/>
    <property type="evidence" value="ECO:0007669"/>
    <property type="project" value="UniProtKB-UniRule"/>
</dbReference>
<dbReference type="Gene3D" id="1.10.1420.10">
    <property type="match status" value="2"/>
</dbReference>
<dbReference type="Gene3D" id="3.40.1170.10">
    <property type="entry name" value="DNA repair protein MutS, domain I"/>
    <property type="match status" value="1"/>
</dbReference>
<dbReference type="Gene3D" id="3.30.420.110">
    <property type="entry name" value="MutS, connector domain"/>
    <property type="match status" value="1"/>
</dbReference>
<dbReference type="Gene3D" id="3.40.50.300">
    <property type="entry name" value="P-loop containing nucleotide triphosphate hydrolases"/>
    <property type="match status" value="1"/>
</dbReference>
<dbReference type="HAMAP" id="MF_00096">
    <property type="entry name" value="MutS"/>
    <property type="match status" value="1"/>
</dbReference>
<dbReference type="InterPro" id="IPR005748">
    <property type="entry name" value="DNA_mismatch_repair_MutS"/>
</dbReference>
<dbReference type="InterPro" id="IPR007695">
    <property type="entry name" value="DNA_mismatch_repair_MutS-lik_N"/>
</dbReference>
<dbReference type="InterPro" id="IPR017261">
    <property type="entry name" value="DNA_mismatch_repair_MutS/MSH"/>
</dbReference>
<dbReference type="InterPro" id="IPR000432">
    <property type="entry name" value="DNA_mismatch_repair_MutS_C"/>
</dbReference>
<dbReference type="InterPro" id="IPR007861">
    <property type="entry name" value="DNA_mismatch_repair_MutS_clamp"/>
</dbReference>
<dbReference type="InterPro" id="IPR007696">
    <property type="entry name" value="DNA_mismatch_repair_MutS_core"/>
</dbReference>
<dbReference type="InterPro" id="IPR016151">
    <property type="entry name" value="DNA_mismatch_repair_MutS_N"/>
</dbReference>
<dbReference type="InterPro" id="IPR036187">
    <property type="entry name" value="DNA_mismatch_repair_MutS_sf"/>
</dbReference>
<dbReference type="InterPro" id="IPR007860">
    <property type="entry name" value="DNA_mmatch_repair_MutS_con_dom"/>
</dbReference>
<dbReference type="InterPro" id="IPR045076">
    <property type="entry name" value="MutS"/>
</dbReference>
<dbReference type="InterPro" id="IPR036678">
    <property type="entry name" value="MutS_con_dom_sf"/>
</dbReference>
<dbReference type="InterPro" id="IPR027417">
    <property type="entry name" value="P-loop_NTPase"/>
</dbReference>
<dbReference type="NCBIfam" id="TIGR01070">
    <property type="entry name" value="mutS1"/>
    <property type="match status" value="1"/>
</dbReference>
<dbReference type="NCBIfam" id="NF003810">
    <property type="entry name" value="PRK05399.1"/>
    <property type="match status" value="1"/>
</dbReference>
<dbReference type="PANTHER" id="PTHR11361:SF34">
    <property type="entry name" value="DNA MISMATCH REPAIR PROTEIN MSH1, MITOCHONDRIAL"/>
    <property type="match status" value="1"/>
</dbReference>
<dbReference type="PANTHER" id="PTHR11361">
    <property type="entry name" value="DNA MISMATCH REPAIR PROTEIN MUTS FAMILY MEMBER"/>
    <property type="match status" value="1"/>
</dbReference>
<dbReference type="Pfam" id="PF01624">
    <property type="entry name" value="MutS_I"/>
    <property type="match status" value="1"/>
</dbReference>
<dbReference type="Pfam" id="PF05188">
    <property type="entry name" value="MutS_II"/>
    <property type="match status" value="1"/>
</dbReference>
<dbReference type="Pfam" id="PF05192">
    <property type="entry name" value="MutS_III"/>
    <property type="match status" value="1"/>
</dbReference>
<dbReference type="Pfam" id="PF05190">
    <property type="entry name" value="MutS_IV"/>
    <property type="match status" value="1"/>
</dbReference>
<dbReference type="Pfam" id="PF00488">
    <property type="entry name" value="MutS_V"/>
    <property type="match status" value="1"/>
</dbReference>
<dbReference type="PIRSF" id="PIRSF037677">
    <property type="entry name" value="DNA_mis_repair_Msh6"/>
    <property type="match status" value="1"/>
</dbReference>
<dbReference type="SMART" id="SM00534">
    <property type="entry name" value="MUTSac"/>
    <property type="match status" value="1"/>
</dbReference>
<dbReference type="SMART" id="SM00533">
    <property type="entry name" value="MUTSd"/>
    <property type="match status" value="1"/>
</dbReference>
<dbReference type="SUPFAM" id="SSF55271">
    <property type="entry name" value="DNA repair protein MutS, domain I"/>
    <property type="match status" value="1"/>
</dbReference>
<dbReference type="SUPFAM" id="SSF53150">
    <property type="entry name" value="DNA repair protein MutS, domain II"/>
    <property type="match status" value="1"/>
</dbReference>
<dbReference type="SUPFAM" id="SSF48334">
    <property type="entry name" value="DNA repair protein MutS, domain III"/>
    <property type="match status" value="1"/>
</dbReference>
<dbReference type="SUPFAM" id="SSF52540">
    <property type="entry name" value="P-loop containing nucleoside triphosphate hydrolases"/>
    <property type="match status" value="1"/>
</dbReference>
<dbReference type="PROSITE" id="PS00486">
    <property type="entry name" value="DNA_MISMATCH_REPAIR_2"/>
    <property type="match status" value="1"/>
</dbReference>
<reference key="1">
    <citation type="journal article" date="2004" name="Genome Res.">
        <title>Genome sequence of Haloarcula marismortui: a halophilic archaeon from the Dead Sea.</title>
        <authorList>
            <person name="Baliga N.S."/>
            <person name="Bonneau R."/>
            <person name="Facciotti M.T."/>
            <person name="Pan M."/>
            <person name="Glusman G."/>
            <person name="Deutsch E.W."/>
            <person name="Shannon P."/>
            <person name="Chiu Y."/>
            <person name="Weng R.S."/>
            <person name="Gan R.R."/>
            <person name="Hung P."/>
            <person name="Date S.V."/>
            <person name="Marcotte E."/>
            <person name="Hood L."/>
            <person name="Ng W.V."/>
        </authorList>
    </citation>
    <scope>NUCLEOTIDE SEQUENCE [LARGE SCALE GENOMIC DNA]</scope>
    <source>
        <strain>ATCC 43049 / DSM 3752 / JCM 8966 / VKM B-1809</strain>
    </source>
</reference>
<comment type="function">
    <text evidence="1">This protein is involved in the repair of mismatches in DNA. It is possible that it carries out the mismatch recognition step. This protein has a weak ATPase activity.</text>
</comment>
<comment type="similarity">
    <text evidence="1">Belongs to the DNA mismatch repair MutS family.</text>
</comment>
<comment type="sequence caution" evidence="3">
    <conflict type="erroneous initiation">
        <sequence resource="EMBL-CDS" id="AAV47672"/>
    </conflict>
</comment>